<gene>
    <name evidence="1" type="primary">HTR2C</name>
</gene>
<proteinExistence type="evidence at transcript level"/>
<comment type="function">
    <text evidence="1 2">G-protein coupled receptor for 5-hydroxytryptamine (serotonin). Also functions as a receptor for various drugs and psychoactive substances, including ergot alkaloid derivatives, 1-2,5,-dimethoxy-4-iodophenyl-2-aminopropane (DOI) and lysergic acid diethylamide (LSD). Ligand binding causes a conformation change that triggers signaling via guanine nucleotide-binding proteins (G proteins) and modulates the activity of downstream effectors. HTR2C is coupled to G(q)/G(11) G alpha proteins and activates phospholipase C-beta, releasing diacylglycerol (DAG) and inositol 1,4,5-trisphosphate (IP3) second messengers that modulate the activity of phosphatidylinositol 3-kinase and promote the release of Ca(2+) ions from intracellular stores, respectively. Beta-arrestin family members inhibit signaling via G proteins and mediate activation of alternative signaling pathways (By similarity). Regulates neuronal activity via the activation of short transient receptor potential calcium channels in the brain, and thereby modulates the activation of pro-opiomelanocortin neurons and the release of CRH that then regulates the release of corticosterone. Plays a role in the regulation of appetite and eating behavior, responses to anxiogenic stimuli and stress. Plays a role in insulin sensitivity and glucose homeostasis (By similarity).</text>
</comment>
<comment type="subunit">
    <text evidence="1">Interacts with MPDZ. Interacts with ARRB2. Interacts with MPP3; this interaction stabilizes the receptor at the plasma membrane and prevents the desensitization of the HTR2C receptor-mediated calcium response.</text>
</comment>
<comment type="subcellular location">
    <subcellularLocation>
        <location evidence="1">Cell membrane</location>
        <topology evidence="4">Multi-pass membrane protein</topology>
    </subcellularLocation>
</comment>
<comment type="domain">
    <text evidence="1">The PDZ domain-binding motif is involved in the interaction with MPDZ.</text>
</comment>
<comment type="similarity">
    <text evidence="5">Belongs to the G-protein coupled receptor 1 family.</text>
</comment>
<feature type="signal peptide" evidence="1">
    <location>
        <begin position="1"/>
        <end position="32"/>
    </location>
</feature>
<feature type="chain" id="PRO_0000068957" description="5-hydroxytryptamine receptor 2C">
    <location>
        <begin position="33"/>
        <end position="458"/>
    </location>
</feature>
<feature type="topological domain" description="Extracellular" evidence="1">
    <location>
        <begin position="33"/>
        <end position="55"/>
    </location>
</feature>
<feature type="transmembrane region" description="Helical; Name=1" evidence="1">
    <location>
        <begin position="56"/>
        <end position="80"/>
    </location>
</feature>
<feature type="topological domain" description="Cytoplasmic" evidence="1">
    <location>
        <begin position="81"/>
        <end position="86"/>
    </location>
</feature>
<feature type="transmembrane region" description="Helical; Name=2" evidence="1">
    <location>
        <begin position="87"/>
        <end position="111"/>
    </location>
</feature>
<feature type="topological domain" description="Extracellular" evidence="1">
    <location>
        <begin position="112"/>
        <end position="128"/>
    </location>
</feature>
<feature type="transmembrane region" description="Helical; Name=3" evidence="1">
    <location>
        <begin position="129"/>
        <end position="151"/>
    </location>
</feature>
<feature type="topological domain" description="Cytoplasmic" evidence="1">
    <location>
        <begin position="152"/>
        <end position="167"/>
    </location>
</feature>
<feature type="transmembrane region" description="Helical; Name=4" evidence="1">
    <location>
        <begin position="168"/>
        <end position="189"/>
    </location>
</feature>
<feature type="topological domain" description="Extracellular" evidence="1">
    <location>
        <begin position="190"/>
        <end position="213"/>
    </location>
</feature>
<feature type="transmembrane region" description="Helical; Name=5" evidence="1">
    <location>
        <begin position="214"/>
        <end position="236"/>
    </location>
</feature>
<feature type="topological domain" description="Cytoplasmic" evidence="1">
    <location>
        <begin position="237"/>
        <end position="311"/>
    </location>
</feature>
<feature type="transmembrane region" description="Helical; Name=6" evidence="1">
    <location>
        <begin position="312"/>
        <end position="336"/>
    </location>
</feature>
<feature type="topological domain" description="Extracellular" evidence="1">
    <location>
        <begin position="337"/>
        <end position="347"/>
    </location>
</feature>
<feature type="transmembrane region" description="Helical; Name=7" evidence="1">
    <location>
        <begin position="348"/>
        <end position="370"/>
    </location>
</feature>
<feature type="topological domain" description="Cytoplasmic" evidence="1">
    <location>
        <begin position="371"/>
        <end position="458"/>
    </location>
</feature>
<feature type="region of interest" description="Disordered" evidence="6">
    <location>
        <begin position="272"/>
        <end position="301"/>
    </location>
</feature>
<feature type="short sequence motif" description="DRY motif; important for ligand-induced conformation changes" evidence="3">
    <location>
        <begin position="151"/>
        <end position="153"/>
    </location>
</feature>
<feature type="short sequence motif" description="NPxxY motif; important for ligand-induced conformation changes and signaling" evidence="3">
    <location>
        <begin position="364"/>
        <end position="368"/>
    </location>
</feature>
<feature type="short sequence motif" description="PDZ-binding">
    <location>
        <begin position="456"/>
        <end position="458"/>
    </location>
</feature>
<feature type="compositionally biased region" description="Basic residues" evidence="6">
    <location>
        <begin position="287"/>
        <end position="297"/>
    </location>
</feature>
<feature type="binding site" evidence="1">
    <location>
        <position position="139"/>
    </location>
    <ligand>
        <name>ergotamine</name>
        <dbReference type="ChEBI" id="CHEBI:190463"/>
        <note>agonist</note>
    </ligand>
</feature>
<feature type="binding site" evidence="1">
    <location>
        <position position="209"/>
    </location>
    <ligand>
        <name>ergotamine</name>
        <dbReference type="ChEBI" id="CHEBI:190463"/>
        <note>agonist</note>
    </ligand>
</feature>
<feature type="glycosylation site" description="N-linked (GlcNAc...) asparagine" evidence="4">
    <location>
        <position position="203"/>
    </location>
</feature>
<feature type="glycosylation site" description="N-linked (GlcNAc...) asparagine" evidence="4">
    <location>
        <position position="204"/>
    </location>
</feature>
<feature type="disulfide bond" evidence="5">
    <location>
        <begin position="127"/>
        <end position="207"/>
    </location>
</feature>
<feature type="disulfide bond" evidence="5">
    <location>
        <begin position="337"/>
        <end position="341"/>
    </location>
</feature>
<reference key="1">
    <citation type="journal article" date="2004" name="J. Vet. Med. Sci.">
        <title>Sequencing of canine 5-hydroxytriptamine receptor (5-HTR) 1B, 2A, 2C genes and identification of polymorphisms in the 5-HTR1B gene.</title>
        <authorList>
            <person name="Masuda K."/>
            <person name="Hashizume C."/>
            <person name="Ogata N."/>
            <person name="Kikusui T."/>
            <person name="Takeuchi Y."/>
            <person name="Mori Y."/>
        </authorList>
    </citation>
    <scope>NUCLEOTIDE SEQUENCE [MRNA]</scope>
    <source>
        <strain>Beagle</strain>
    </source>
</reference>
<dbReference type="EMBL" id="AB193091">
    <property type="protein sequence ID" value="BAD60921.1"/>
    <property type="molecule type" value="mRNA"/>
</dbReference>
<dbReference type="RefSeq" id="NP_001006649.1">
    <property type="nucleotide sequence ID" value="NM_001006648.1"/>
</dbReference>
<dbReference type="SMR" id="Q60F97"/>
<dbReference type="FunCoup" id="Q60F97">
    <property type="interactions" value="285"/>
</dbReference>
<dbReference type="STRING" id="9615.ENSCAFP00000046494"/>
<dbReference type="BindingDB" id="Q60F97"/>
<dbReference type="ChEMBL" id="CHEMBL1770041"/>
<dbReference type="GlyCosmos" id="Q60F97">
    <property type="glycosylation" value="3 sites, No reported glycans"/>
</dbReference>
<dbReference type="PaxDb" id="9612-ENSCAFP00000043222"/>
<dbReference type="GeneID" id="450240"/>
<dbReference type="KEGG" id="cfa:450240"/>
<dbReference type="CTD" id="3358"/>
<dbReference type="eggNOG" id="KOG3656">
    <property type="taxonomic scope" value="Eukaryota"/>
</dbReference>
<dbReference type="InParanoid" id="Q60F97"/>
<dbReference type="OrthoDB" id="420518at2759"/>
<dbReference type="PRO" id="PR:Q60F97"/>
<dbReference type="Proteomes" id="UP000002254">
    <property type="component" value="Unplaced"/>
</dbReference>
<dbReference type="Proteomes" id="UP000694429">
    <property type="component" value="Unplaced"/>
</dbReference>
<dbReference type="Proteomes" id="UP000694542">
    <property type="component" value="Unplaced"/>
</dbReference>
<dbReference type="Proteomes" id="UP000805418">
    <property type="component" value="Unplaced"/>
</dbReference>
<dbReference type="GO" id="GO:0030425">
    <property type="term" value="C:dendrite"/>
    <property type="evidence" value="ECO:0000318"/>
    <property type="project" value="GO_Central"/>
</dbReference>
<dbReference type="GO" id="GO:0005886">
    <property type="term" value="C:plasma membrane"/>
    <property type="evidence" value="ECO:0000250"/>
    <property type="project" value="UniProtKB"/>
</dbReference>
<dbReference type="GO" id="GO:0045202">
    <property type="term" value="C:synapse"/>
    <property type="evidence" value="ECO:0007669"/>
    <property type="project" value="GOC"/>
</dbReference>
<dbReference type="GO" id="GO:0004993">
    <property type="term" value="F:G protein-coupled serotonin receptor activity"/>
    <property type="evidence" value="ECO:0000318"/>
    <property type="project" value="GO_Central"/>
</dbReference>
<dbReference type="GO" id="GO:0001587">
    <property type="term" value="F:Gq/11-coupled serotonin receptor activity"/>
    <property type="evidence" value="ECO:0000250"/>
    <property type="project" value="UniProtKB"/>
</dbReference>
<dbReference type="GO" id="GO:0030594">
    <property type="term" value="F:neurotransmitter receptor activity"/>
    <property type="evidence" value="ECO:0000318"/>
    <property type="project" value="GO_Central"/>
</dbReference>
<dbReference type="GO" id="GO:0001662">
    <property type="term" value="P:behavioral fear response"/>
    <property type="evidence" value="ECO:0000250"/>
    <property type="project" value="UniProtKB"/>
</dbReference>
<dbReference type="GO" id="GO:0007268">
    <property type="term" value="P:chemical synaptic transmission"/>
    <property type="evidence" value="ECO:0000318"/>
    <property type="project" value="GO_Central"/>
</dbReference>
<dbReference type="GO" id="GO:0007631">
    <property type="term" value="P:feeding behavior"/>
    <property type="evidence" value="ECO:0000250"/>
    <property type="project" value="UniProtKB"/>
</dbReference>
<dbReference type="GO" id="GO:0007187">
    <property type="term" value="P:G protein-coupled receptor signaling pathway, coupled to cyclic nucleotide second messenger"/>
    <property type="evidence" value="ECO:0000318"/>
    <property type="project" value="GO_Central"/>
</dbReference>
<dbReference type="GO" id="GO:0007626">
    <property type="term" value="P:locomotory behavior"/>
    <property type="evidence" value="ECO:0007669"/>
    <property type="project" value="InterPro"/>
</dbReference>
<dbReference type="GO" id="GO:0007200">
    <property type="term" value="P:phospholipase C-activating G protein-coupled receptor signaling pathway"/>
    <property type="evidence" value="ECO:0000250"/>
    <property type="project" value="UniProtKB"/>
</dbReference>
<dbReference type="GO" id="GO:0007208">
    <property type="term" value="P:phospholipase C-activating serotonin receptor signaling pathway"/>
    <property type="evidence" value="ECO:0000250"/>
    <property type="project" value="UniProtKB"/>
</dbReference>
<dbReference type="GO" id="GO:0032098">
    <property type="term" value="P:regulation of appetite"/>
    <property type="evidence" value="ECO:0000250"/>
    <property type="project" value="UniProtKB"/>
</dbReference>
<dbReference type="GO" id="GO:0043397">
    <property type="term" value="P:regulation of corticotropin-releasing hormone secretion"/>
    <property type="evidence" value="ECO:0000250"/>
    <property type="project" value="UniProtKB"/>
</dbReference>
<dbReference type="GO" id="GO:0031644">
    <property type="term" value="P:regulation of nervous system process"/>
    <property type="evidence" value="ECO:0000250"/>
    <property type="project" value="UniProtKB"/>
</dbReference>
<dbReference type="GO" id="GO:0051209">
    <property type="term" value="P:release of sequestered calcium ion into cytosol"/>
    <property type="evidence" value="ECO:0000318"/>
    <property type="project" value="GO_Central"/>
</dbReference>
<dbReference type="GO" id="GO:0007210">
    <property type="term" value="P:serotonin receptor signaling pathway"/>
    <property type="evidence" value="ECO:0000318"/>
    <property type="project" value="GO_Central"/>
</dbReference>
<dbReference type="Gene3D" id="1.20.1070.10">
    <property type="entry name" value="Rhodopsin 7-helix transmembrane proteins"/>
    <property type="match status" value="1"/>
</dbReference>
<dbReference type="InterPro" id="IPR000377">
    <property type="entry name" value="5HT2C_rcpt"/>
</dbReference>
<dbReference type="InterPro" id="IPR002231">
    <property type="entry name" value="5HT_rcpt"/>
</dbReference>
<dbReference type="InterPro" id="IPR000276">
    <property type="entry name" value="GPCR_Rhodpsn"/>
</dbReference>
<dbReference type="InterPro" id="IPR017452">
    <property type="entry name" value="GPCR_Rhodpsn_7TM"/>
</dbReference>
<dbReference type="PANTHER" id="PTHR24247">
    <property type="entry name" value="5-HYDROXYTRYPTAMINE RECEPTOR"/>
    <property type="match status" value="1"/>
</dbReference>
<dbReference type="PANTHER" id="PTHR24247:SF32">
    <property type="entry name" value="5-HYDROXYTRYPTAMINE RECEPTOR 2C"/>
    <property type="match status" value="1"/>
</dbReference>
<dbReference type="Pfam" id="PF00001">
    <property type="entry name" value="7tm_1"/>
    <property type="match status" value="1"/>
</dbReference>
<dbReference type="PRINTS" id="PR00517">
    <property type="entry name" value="5HT2CRECEPTR"/>
</dbReference>
<dbReference type="PRINTS" id="PR01101">
    <property type="entry name" value="5HTRECEPTOR"/>
</dbReference>
<dbReference type="PRINTS" id="PR00237">
    <property type="entry name" value="GPCRRHODOPSN"/>
</dbReference>
<dbReference type="SMART" id="SM01381">
    <property type="entry name" value="7TM_GPCR_Srsx"/>
    <property type="match status" value="1"/>
</dbReference>
<dbReference type="SUPFAM" id="SSF81321">
    <property type="entry name" value="Family A G protein-coupled receptor-like"/>
    <property type="match status" value="1"/>
</dbReference>
<dbReference type="PROSITE" id="PS00237">
    <property type="entry name" value="G_PROTEIN_RECEP_F1_1"/>
    <property type="match status" value="1"/>
</dbReference>
<dbReference type="PROSITE" id="PS50262">
    <property type="entry name" value="G_PROTEIN_RECEP_F1_2"/>
    <property type="match status" value="1"/>
</dbReference>
<keyword id="KW-0085">Behavior</keyword>
<keyword id="KW-1003">Cell membrane</keyword>
<keyword id="KW-1015">Disulfide bond</keyword>
<keyword id="KW-0297">G-protein coupled receptor</keyword>
<keyword id="KW-0325">Glycoprotein</keyword>
<keyword id="KW-0472">Membrane</keyword>
<keyword id="KW-0675">Receptor</keyword>
<keyword id="KW-1185">Reference proteome</keyword>
<keyword id="KW-0732">Signal</keyword>
<keyword id="KW-0807">Transducer</keyword>
<keyword id="KW-0812">Transmembrane</keyword>
<keyword id="KW-1133">Transmembrane helix</keyword>
<organism>
    <name type="scientific">Canis lupus familiaris</name>
    <name type="common">Dog</name>
    <name type="synonym">Canis familiaris</name>
    <dbReference type="NCBI Taxonomy" id="9615"/>
    <lineage>
        <taxon>Eukaryota</taxon>
        <taxon>Metazoa</taxon>
        <taxon>Chordata</taxon>
        <taxon>Craniata</taxon>
        <taxon>Vertebrata</taxon>
        <taxon>Euteleostomi</taxon>
        <taxon>Mammalia</taxon>
        <taxon>Eutheria</taxon>
        <taxon>Laurasiatheria</taxon>
        <taxon>Carnivora</taxon>
        <taxon>Caniformia</taxon>
        <taxon>Canidae</taxon>
        <taxon>Canis</taxon>
    </lineage>
</organism>
<name>5HT2C_CANLF</name>
<accession>Q60F97</accession>
<evidence type="ECO:0000250" key="1">
    <source>
        <dbReference type="UniProtKB" id="P28335"/>
    </source>
</evidence>
<evidence type="ECO:0000250" key="2">
    <source>
        <dbReference type="UniProtKB" id="P34968"/>
    </source>
</evidence>
<evidence type="ECO:0000250" key="3">
    <source>
        <dbReference type="UniProtKB" id="P41595"/>
    </source>
</evidence>
<evidence type="ECO:0000255" key="4"/>
<evidence type="ECO:0000255" key="5">
    <source>
        <dbReference type="PROSITE-ProRule" id="PRU00521"/>
    </source>
</evidence>
<evidence type="ECO:0000256" key="6">
    <source>
        <dbReference type="SAM" id="MobiDB-lite"/>
    </source>
</evidence>
<protein>
    <recommendedName>
        <fullName evidence="1">5-hydroxytryptamine receptor 2C</fullName>
        <shortName>5-HT-2C</shortName>
        <shortName>5-HT2C</shortName>
        <shortName>5-HTR2C</shortName>
    </recommendedName>
    <alternativeName>
        <fullName>Serotonin receptor 2C</fullName>
    </alternativeName>
</protein>
<sequence>MVNLRKAVHSFLVHLIGLLVWQCDISVSPVAALVTDIFNTSDGGRFKFPDGVQNWPALSIVIIIILTIGGNILVIMAVSLEKKLHNATNYFLMSLAIADMLVGLLVMPLSLLAILYDYVWPLPRYLCPVWISLDVLFSTASIMHLCAISLDRYVAIRNPVEHSRFNSRTKAIMKIAIVWAISIGVSVPIPVIGLRDEEKVFVNNTTCVLNDPNFVLIGSFVAFFIPLTIMVITYCLTIHVLRRQALMLLHGHVEEPPRINLDFLKCCRRNGTEEENSANPNQDSNPRRRKKKERRPRGTMQAINNERKASKVLGIVFFVFLVMWCPFFITNILSVLCGKACNQKLMEKLLNVFVWIGYVCSGINPLVYTLFNKIYRRAFSNYLRCNYKPEKKPPVRQMPRVAATALSGRELNVNIYRHTNEPVLKKANDKEPGIEMQVENLELPVNPSSVVSERISSV</sequence>